<name>CARB_LISMF</name>
<comment type="function">
    <text evidence="1">Large subunit of the glutamine-dependent carbamoyl phosphate synthetase (CPSase). CPSase catalyzes the formation of carbamoyl phosphate from the ammonia moiety of glutamine, carbonate, and phosphate donated by ATP, constituting the first step of 2 biosynthetic pathways, one leading to arginine and/or urea and the other to pyrimidine nucleotides. The large subunit (synthetase) binds the substrates ammonia (free or transferred from glutamine from the small subunit), hydrogencarbonate and ATP and carries out an ATP-coupled ligase reaction, activating hydrogencarbonate by forming carboxy phosphate which reacts with ammonia to form carbamoyl phosphate.</text>
</comment>
<comment type="catalytic activity">
    <reaction evidence="1">
        <text>hydrogencarbonate + L-glutamine + 2 ATP + H2O = carbamoyl phosphate + L-glutamate + 2 ADP + phosphate + 2 H(+)</text>
        <dbReference type="Rhea" id="RHEA:18633"/>
        <dbReference type="ChEBI" id="CHEBI:15377"/>
        <dbReference type="ChEBI" id="CHEBI:15378"/>
        <dbReference type="ChEBI" id="CHEBI:17544"/>
        <dbReference type="ChEBI" id="CHEBI:29985"/>
        <dbReference type="ChEBI" id="CHEBI:30616"/>
        <dbReference type="ChEBI" id="CHEBI:43474"/>
        <dbReference type="ChEBI" id="CHEBI:58228"/>
        <dbReference type="ChEBI" id="CHEBI:58359"/>
        <dbReference type="ChEBI" id="CHEBI:456216"/>
        <dbReference type="EC" id="6.3.5.5"/>
    </reaction>
</comment>
<comment type="catalytic activity">
    <molecule>Carbamoyl phosphate synthase large chain</molecule>
    <reaction evidence="1">
        <text>hydrogencarbonate + NH4(+) + 2 ATP = carbamoyl phosphate + 2 ADP + phosphate + 2 H(+)</text>
        <dbReference type="Rhea" id="RHEA:18029"/>
        <dbReference type="ChEBI" id="CHEBI:15378"/>
        <dbReference type="ChEBI" id="CHEBI:17544"/>
        <dbReference type="ChEBI" id="CHEBI:28938"/>
        <dbReference type="ChEBI" id="CHEBI:30616"/>
        <dbReference type="ChEBI" id="CHEBI:43474"/>
        <dbReference type="ChEBI" id="CHEBI:58228"/>
        <dbReference type="ChEBI" id="CHEBI:456216"/>
        <dbReference type="EC" id="6.3.4.16"/>
    </reaction>
</comment>
<comment type="cofactor">
    <cofactor evidence="1">
        <name>Mg(2+)</name>
        <dbReference type="ChEBI" id="CHEBI:18420"/>
    </cofactor>
    <cofactor evidence="1">
        <name>Mn(2+)</name>
        <dbReference type="ChEBI" id="CHEBI:29035"/>
    </cofactor>
    <text evidence="1">Binds 4 Mg(2+) or Mn(2+) ions per subunit.</text>
</comment>
<comment type="pathway">
    <text evidence="1">Amino-acid biosynthesis; L-arginine biosynthesis; carbamoyl phosphate from bicarbonate: step 1/1.</text>
</comment>
<comment type="pathway">
    <text evidence="1">Pyrimidine metabolism; UMP biosynthesis via de novo pathway; (S)-dihydroorotate from bicarbonate: step 1/3.</text>
</comment>
<comment type="subunit">
    <text evidence="1">Composed of two chains; the small (or glutamine) chain promotes the hydrolysis of glutamine to ammonia, which is used by the large (or ammonia) chain to synthesize carbamoyl phosphate. Tetramer of heterodimers (alpha,beta)4.</text>
</comment>
<comment type="domain">
    <text evidence="1">The large subunit is composed of 2 ATP-grasp domains that are involved in binding the 2 ATP molecules needed for carbamoyl phosphate synthesis. The N-terminal ATP-grasp domain (referred to as the carboxyphosphate synthetic component) catalyzes the ATP-dependent phosphorylation of hydrogencarbonate to carboxyphosphate and the subsequent nucleophilic attack by ammonia to form a carbamate intermediate. The C-terminal ATP-grasp domain (referred to as the carbamoyl phosphate synthetic component) then catalyzes the phosphorylation of carbamate with the second ATP to form the end product carbamoyl phosphate. The reactive and unstable enzyme intermediates are sequentially channeled from one active site to the next through the interior of the protein over a distance of at least 96 A.</text>
</comment>
<comment type="similarity">
    <text evidence="1">Belongs to the CarB family.</text>
</comment>
<gene>
    <name evidence="1" type="primary">carB</name>
    <name type="ordered locus">LMOf2365_1863</name>
</gene>
<sequence length="1070" mass="117803">MPKRDDIKTILVIGSGPIVIGQAAEFDYAGTQACLSLKEEGYRVVLVNSNPATIMTDAEMADKVYIEPITLDFVSRIIRKERPDAILPTLGGQTGLNMAMELSAAGILDECNVEVLGTDLTAIKKAEDREAFRDLMNELGEPVPESDIIHNLDEAYTFVERIGYPVIVRPAYTLGGSGGGICHNEQELIETVTSGLKLSPVTQCLLEKSIAGFKEVEYEVMRDANNNAMVVCNMENIDPVGIHTGDSIVVAPSQTLSDREYQLLRDVSLKIIRALEIEGGCNVQLALDPDSYNYYVIEVNPRVSRSSALASKATGYPIAKLAAKIAVGLTLDEVRNPVTGTTFAHFEPTLDYVVAKIPRFAFDKFEQADRRLGTQMKATGEVMAIGRSWEEALLKAVRSLEIGADHLLLEEAENADEATLERKICFPEDDRLFFLAAALRRGQTIEQLHAKTKIDLFFLYKLSKTIELENRIKENPQNQEILAEAKRAGFSDAFLATCWNVDEQAIYDLRKAQNLFPVYKMVDTCAAEFESTTPYFYSTYEEENESTRSAKESVIVLGSGPIRIGQGVEFDYATVHSVWAIQQAGYEAIIINNNPETVSTDFSISDKLYFEPLTLEDVMHVIEIEQPLGVVVQFGGQTAINLADGLAKRGVKILGTSLEDTDRAENRDAFEKALEILQIPQPAGKTATSVEEAINVATDIGYPVLVRPSYVLGGRAMEIVESEEALKHYMTNAVKVNPKHPVLVDRYVSGQEVEVDAISDGENVLIPGIMEHIERAGVHSGDSIAVYPAQRLSSQVKNTIVDYTTRLATGLNIIGMLNIQYVVDGEEVFVIEVNPRSSRTAPFLSKITEIPMANVATRVILGENLIDLGYTPGLAPEKQEIFVKVPVFSFAKLRSVDTSLGPEMKSTGEVMGKDVTLEKALYKGFVASGTTMHDYGTVLLTVADRDKEEAVELAKRFNRIGFTIMATKGTASTLEEANIPVSQVKKIGENQETLIDYIRNGQVTLVVNTLTTGKRPERDGFQIRRESVENGIPVCTSLDTAEAILRVLESRSFELESMNASEVKQPKARV</sequence>
<dbReference type="EC" id="6.3.4.16" evidence="1"/>
<dbReference type="EC" id="6.3.5.5" evidence="1"/>
<dbReference type="EMBL" id="AE017262">
    <property type="protein sequence ID" value="AAT04633.1"/>
    <property type="molecule type" value="Genomic_DNA"/>
</dbReference>
<dbReference type="RefSeq" id="WP_003730839.1">
    <property type="nucleotide sequence ID" value="NC_002973.6"/>
</dbReference>
<dbReference type="SMR" id="Q71YI1"/>
<dbReference type="KEGG" id="lmf:LMOf2365_1863"/>
<dbReference type="HOGENOM" id="CLU_000513_1_2_9"/>
<dbReference type="UniPathway" id="UPA00068">
    <property type="reaction ID" value="UER00171"/>
</dbReference>
<dbReference type="UniPathway" id="UPA00070">
    <property type="reaction ID" value="UER00115"/>
</dbReference>
<dbReference type="GO" id="GO:0005737">
    <property type="term" value="C:cytoplasm"/>
    <property type="evidence" value="ECO:0007669"/>
    <property type="project" value="TreeGrafter"/>
</dbReference>
<dbReference type="GO" id="GO:0005524">
    <property type="term" value="F:ATP binding"/>
    <property type="evidence" value="ECO:0007669"/>
    <property type="project" value="UniProtKB-UniRule"/>
</dbReference>
<dbReference type="GO" id="GO:0004087">
    <property type="term" value="F:carbamoyl-phosphate synthase (ammonia) activity"/>
    <property type="evidence" value="ECO:0007669"/>
    <property type="project" value="RHEA"/>
</dbReference>
<dbReference type="GO" id="GO:0004088">
    <property type="term" value="F:carbamoyl-phosphate synthase (glutamine-hydrolyzing) activity"/>
    <property type="evidence" value="ECO:0007669"/>
    <property type="project" value="UniProtKB-UniRule"/>
</dbReference>
<dbReference type="GO" id="GO:0046872">
    <property type="term" value="F:metal ion binding"/>
    <property type="evidence" value="ECO:0007669"/>
    <property type="project" value="UniProtKB-KW"/>
</dbReference>
<dbReference type="GO" id="GO:0044205">
    <property type="term" value="P:'de novo' UMP biosynthetic process"/>
    <property type="evidence" value="ECO:0007669"/>
    <property type="project" value="UniProtKB-UniRule"/>
</dbReference>
<dbReference type="GO" id="GO:0006541">
    <property type="term" value="P:glutamine metabolic process"/>
    <property type="evidence" value="ECO:0007669"/>
    <property type="project" value="TreeGrafter"/>
</dbReference>
<dbReference type="GO" id="GO:0006526">
    <property type="term" value="P:L-arginine biosynthetic process"/>
    <property type="evidence" value="ECO:0007669"/>
    <property type="project" value="UniProtKB-UniRule"/>
</dbReference>
<dbReference type="CDD" id="cd01424">
    <property type="entry name" value="MGS_CPS_II"/>
    <property type="match status" value="1"/>
</dbReference>
<dbReference type="FunFam" id="1.10.1030.10:FF:000002">
    <property type="entry name" value="Carbamoyl-phosphate synthase large chain"/>
    <property type="match status" value="1"/>
</dbReference>
<dbReference type="FunFam" id="3.30.1490.20:FF:000001">
    <property type="entry name" value="Carbamoyl-phosphate synthase large chain"/>
    <property type="match status" value="1"/>
</dbReference>
<dbReference type="FunFam" id="3.30.470.20:FF:000001">
    <property type="entry name" value="Carbamoyl-phosphate synthase large chain"/>
    <property type="match status" value="1"/>
</dbReference>
<dbReference type="FunFam" id="3.30.470.20:FF:000026">
    <property type="entry name" value="Carbamoyl-phosphate synthase large chain"/>
    <property type="match status" value="1"/>
</dbReference>
<dbReference type="FunFam" id="3.40.50.1380:FF:000011">
    <property type="entry name" value="Carbamoyl-phosphate synthase large chain"/>
    <property type="match status" value="1"/>
</dbReference>
<dbReference type="FunFam" id="3.40.50.20:FF:000001">
    <property type="entry name" value="Carbamoyl-phosphate synthase large chain"/>
    <property type="match status" value="2"/>
</dbReference>
<dbReference type="Gene3D" id="3.40.50.20">
    <property type="match status" value="2"/>
</dbReference>
<dbReference type="Gene3D" id="3.30.1490.20">
    <property type="entry name" value="ATP-grasp fold, A domain"/>
    <property type="match status" value="1"/>
</dbReference>
<dbReference type="Gene3D" id="3.30.470.20">
    <property type="entry name" value="ATP-grasp fold, B domain"/>
    <property type="match status" value="2"/>
</dbReference>
<dbReference type="Gene3D" id="1.10.1030.10">
    <property type="entry name" value="Carbamoyl-phosphate synthetase, large subunit oligomerisation domain"/>
    <property type="match status" value="1"/>
</dbReference>
<dbReference type="Gene3D" id="3.40.50.1380">
    <property type="entry name" value="Methylglyoxal synthase-like domain"/>
    <property type="match status" value="1"/>
</dbReference>
<dbReference type="HAMAP" id="MF_01210_A">
    <property type="entry name" value="CPSase_L_chain_A"/>
    <property type="match status" value="1"/>
</dbReference>
<dbReference type="HAMAP" id="MF_01210_B">
    <property type="entry name" value="CPSase_L_chain_B"/>
    <property type="match status" value="1"/>
</dbReference>
<dbReference type="InterPro" id="IPR011761">
    <property type="entry name" value="ATP-grasp"/>
</dbReference>
<dbReference type="InterPro" id="IPR013815">
    <property type="entry name" value="ATP_grasp_subdomain_1"/>
</dbReference>
<dbReference type="InterPro" id="IPR006275">
    <property type="entry name" value="CarbamoylP_synth_lsu"/>
</dbReference>
<dbReference type="InterPro" id="IPR005480">
    <property type="entry name" value="CarbamoylP_synth_lsu_oligo"/>
</dbReference>
<dbReference type="InterPro" id="IPR036897">
    <property type="entry name" value="CarbamoylP_synth_lsu_oligo_sf"/>
</dbReference>
<dbReference type="InterPro" id="IPR005479">
    <property type="entry name" value="CbamoylP_synth_lsu-like_ATP-bd"/>
</dbReference>
<dbReference type="InterPro" id="IPR005483">
    <property type="entry name" value="CbamoylP_synth_lsu_CPSase_dom"/>
</dbReference>
<dbReference type="InterPro" id="IPR011607">
    <property type="entry name" value="MGS-like_dom"/>
</dbReference>
<dbReference type="InterPro" id="IPR036914">
    <property type="entry name" value="MGS-like_dom_sf"/>
</dbReference>
<dbReference type="InterPro" id="IPR033937">
    <property type="entry name" value="MGS_CPS_CarB"/>
</dbReference>
<dbReference type="InterPro" id="IPR016185">
    <property type="entry name" value="PreATP-grasp_dom_sf"/>
</dbReference>
<dbReference type="NCBIfam" id="TIGR01369">
    <property type="entry name" value="CPSaseII_lrg"/>
    <property type="match status" value="1"/>
</dbReference>
<dbReference type="NCBIfam" id="NF003671">
    <property type="entry name" value="PRK05294.1"/>
    <property type="match status" value="1"/>
</dbReference>
<dbReference type="NCBIfam" id="NF009455">
    <property type="entry name" value="PRK12815.1"/>
    <property type="match status" value="1"/>
</dbReference>
<dbReference type="PANTHER" id="PTHR11405:SF53">
    <property type="entry name" value="CARBAMOYL-PHOSPHATE SYNTHASE [AMMONIA], MITOCHONDRIAL"/>
    <property type="match status" value="1"/>
</dbReference>
<dbReference type="PANTHER" id="PTHR11405">
    <property type="entry name" value="CARBAMOYLTRANSFERASE FAMILY MEMBER"/>
    <property type="match status" value="1"/>
</dbReference>
<dbReference type="Pfam" id="PF02786">
    <property type="entry name" value="CPSase_L_D2"/>
    <property type="match status" value="2"/>
</dbReference>
<dbReference type="Pfam" id="PF02787">
    <property type="entry name" value="CPSase_L_D3"/>
    <property type="match status" value="1"/>
</dbReference>
<dbReference type="Pfam" id="PF02142">
    <property type="entry name" value="MGS"/>
    <property type="match status" value="1"/>
</dbReference>
<dbReference type="PRINTS" id="PR00098">
    <property type="entry name" value="CPSASE"/>
</dbReference>
<dbReference type="SMART" id="SM01096">
    <property type="entry name" value="CPSase_L_D3"/>
    <property type="match status" value="1"/>
</dbReference>
<dbReference type="SMART" id="SM00851">
    <property type="entry name" value="MGS"/>
    <property type="match status" value="1"/>
</dbReference>
<dbReference type="SUPFAM" id="SSF48108">
    <property type="entry name" value="Carbamoyl phosphate synthetase, large subunit connection domain"/>
    <property type="match status" value="1"/>
</dbReference>
<dbReference type="SUPFAM" id="SSF56059">
    <property type="entry name" value="Glutathione synthetase ATP-binding domain-like"/>
    <property type="match status" value="2"/>
</dbReference>
<dbReference type="SUPFAM" id="SSF52335">
    <property type="entry name" value="Methylglyoxal synthase-like"/>
    <property type="match status" value="1"/>
</dbReference>
<dbReference type="SUPFAM" id="SSF52440">
    <property type="entry name" value="PreATP-grasp domain"/>
    <property type="match status" value="2"/>
</dbReference>
<dbReference type="PROSITE" id="PS50975">
    <property type="entry name" value="ATP_GRASP"/>
    <property type="match status" value="2"/>
</dbReference>
<dbReference type="PROSITE" id="PS00866">
    <property type="entry name" value="CPSASE_1"/>
    <property type="match status" value="2"/>
</dbReference>
<dbReference type="PROSITE" id="PS00867">
    <property type="entry name" value="CPSASE_2"/>
    <property type="match status" value="2"/>
</dbReference>
<dbReference type="PROSITE" id="PS51855">
    <property type="entry name" value="MGS"/>
    <property type="match status" value="1"/>
</dbReference>
<proteinExistence type="inferred from homology"/>
<evidence type="ECO:0000255" key="1">
    <source>
        <dbReference type="HAMAP-Rule" id="MF_01210"/>
    </source>
</evidence>
<protein>
    <recommendedName>
        <fullName evidence="1">Carbamoyl phosphate synthase large chain</fullName>
        <ecNumber evidence="1">6.3.4.16</ecNumber>
        <ecNumber evidence="1">6.3.5.5</ecNumber>
    </recommendedName>
    <alternativeName>
        <fullName evidence="1">Carbamoyl phosphate synthetase ammonia chain</fullName>
    </alternativeName>
</protein>
<keyword id="KW-0028">Amino-acid biosynthesis</keyword>
<keyword id="KW-0055">Arginine biosynthesis</keyword>
<keyword id="KW-0067">ATP-binding</keyword>
<keyword id="KW-0436">Ligase</keyword>
<keyword id="KW-0460">Magnesium</keyword>
<keyword id="KW-0464">Manganese</keyword>
<keyword id="KW-0479">Metal-binding</keyword>
<keyword id="KW-0547">Nucleotide-binding</keyword>
<keyword id="KW-0665">Pyrimidine biosynthesis</keyword>
<keyword id="KW-0677">Repeat</keyword>
<accession>Q71YI1</accession>
<feature type="chain" id="PRO_0000145019" description="Carbamoyl phosphate synthase large chain">
    <location>
        <begin position="1"/>
        <end position="1070"/>
    </location>
</feature>
<feature type="domain" description="ATP-grasp 1" evidence="1">
    <location>
        <begin position="133"/>
        <end position="327"/>
    </location>
</feature>
<feature type="domain" description="ATP-grasp 2" evidence="1">
    <location>
        <begin position="671"/>
        <end position="861"/>
    </location>
</feature>
<feature type="domain" description="MGS-like" evidence="1">
    <location>
        <begin position="930"/>
        <end position="1070"/>
    </location>
</feature>
<feature type="region of interest" description="Carboxyphosphate synthetic domain" evidence="1">
    <location>
        <begin position="1"/>
        <end position="401"/>
    </location>
</feature>
<feature type="region of interest" description="Oligomerization domain" evidence="1">
    <location>
        <begin position="402"/>
        <end position="546"/>
    </location>
</feature>
<feature type="region of interest" description="Carbamoyl phosphate synthetic domain" evidence="1">
    <location>
        <begin position="547"/>
        <end position="929"/>
    </location>
</feature>
<feature type="region of interest" description="Allosteric domain" evidence="1">
    <location>
        <begin position="930"/>
        <end position="1070"/>
    </location>
</feature>
<feature type="binding site" evidence="1">
    <location>
        <position position="129"/>
    </location>
    <ligand>
        <name>ATP</name>
        <dbReference type="ChEBI" id="CHEBI:30616"/>
        <label>1</label>
    </ligand>
</feature>
<feature type="binding site" evidence="1">
    <location>
        <position position="169"/>
    </location>
    <ligand>
        <name>ATP</name>
        <dbReference type="ChEBI" id="CHEBI:30616"/>
        <label>1</label>
    </ligand>
</feature>
<feature type="binding site" evidence="1">
    <location>
        <position position="175"/>
    </location>
    <ligand>
        <name>ATP</name>
        <dbReference type="ChEBI" id="CHEBI:30616"/>
        <label>1</label>
    </ligand>
</feature>
<feature type="binding site" evidence="1">
    <location>
        <position position="176"/>
    </location>
    <ligand>
        <name>ATP</name>
        <dbReference type="ChEBI" id="CHEBI:30616"/>
        <label>1</label>
    </ligand>
</feature>
<feature type="binding site" evidence="1">
    <location>
        <position position="208"/>
    </location>
    <ligand>
        <name>ATP</name>
        <dbReference type="ChEBI" id="CHEBI:30616"/>
        <label>1</label>
    </ligand>
</feature>
<feature type="binding site" evidence="1">
    <location>
        <position position="210"/>
    </location>
    <ligand>
        <name>ATP</name>
        <dbReference type="ChEBI" id="CHEBI:30616"/>
        <label>1</label>
    </ligand>
</feature>
<feature type="binding site" evidence="1">
    <location>
        <position position="215"/>
    </location>
    <ligand>
        <name>ATP</name>
        <dbReference type="ChEBI" id="CHEBI:30616"/>
        <label>1</label>
    </ligand>
</feature>
<feature type="binding site" evidence="1">
    <location>
        <position position="241"/>
    </location>
    <ligand>
        <name>ATP</name>
        <dbReference type="ChEBI" id="CHEBI:30616"/>
        <label>1</label>
    </ligand>
</feature>
<feature type="binding site" evidence="1">
    <location>
        <position position="242"/>
    </location>
    <ligand>
        <name>ATP</name>
        <dbReference type="ChEBI" id="CHEBI:30616"/>
        <label>1</label>
    </ligand>
</feature>
<feature type="binding site" evidence="1">
    <location>
        <position position="243"/>
    </location>
    <ligand>
        <name>ATP</name>
        <dbReference type="ChEBI" id="CHEBI:30616"/>
        <label>1</label>
    </ligand>
</feature>
<feature type="binding site" evidence="1">
    <location>
        <position position="284"/>
    </location>
    <ligand>
        <name>ATP</name>
        <dbReference type="ChEBI" id="CHEBI:30616"/>
        <label>1</label>
    </ligand>
</feature>
<feature type="binding site" evidence="1">
    <location>
        <position position="284"/>
    </location>
    <ligand>
        <name>Mg(2+)</name>
        <dbReference type="ChEBI" id="CHEBI:18420"/>
        <label>1</label>
    </ligand>
</feature>
<feature type="binding site" evidence="1">
    <location>
        <position position="284"/>
    </location>
    <ligand>
        <name>Mn(2+)</name>
        <dbReference type="ChEBI" id="CHEBI:29035"/>
        <label>1</label>
    </ligand>
</feature>
<feature type="binding site" evidence="1">
    <location>
        <position position="298"/>
    </location>
    <ligand>
        <name>ATP</name>
        <dbReference type="ChEBI" id="CHEBI:30616"/>
        <label>1</label>
    </ligand>
</feature>
<feature type="binding site" evidence="1">
    <location>
        <position position="298"/>
    </location>
    <ligand>
        <name>Mg(2+)</name>
        <dbReference type="ChEBI" id="CHEBI:18420"/>
        <label>1</label>
    </ligand>
</feature>
<feature type="binding site" evidence="1">
    <location>
        <position position="298"/>
    </location>
    <ligand>
        <name>Mg(2+)</name>
        <dbReference type="ChEBI" id="CHEBI:18420"/>
        <label>2</label>
    </ligand>
</feature>
<feature type="binding site" evidence="1">
    <location>
        <position position="298"/>
    </location>
    <ligand>
        <name>Mn(2+)</name>
        <dbReference type="ChEBI" id="CHEBI:29035"/>
        <label>1</label>
    </ligand>
</feature>
<feature type="binding site" evidence="1">
    <location>
        <position position="298"/>
    </location>
    <ligand>
        <name>Mn(2+)</name>
        <dbReference type="ChEBI" id="CHEBI:29035"/>
        <label>2</label>
    </ligand>
</feature>
<feature type="binding site" evidence="1">
    <location>
        <position position="300"/>
    </location>
    <ligand>
        <name>Mg(2+)</name>
        <dbReference type="ChEBI" id="CHEBI:18420"/>
        <label>2</label>
    </ligand>
</feature>
<feature type="binding site" evidence="1">
    <location>
        <position position="300"/>
    </location>
    <ligand>
        <name>Mn(2+)</name>
        <dbReference type="ChEBI" id="CHEBI:29035"/>
        <label>2</label>
    </ligand>
</feature>
<feature type="binding site" evidence="1">
    <location>
        <position position="707"/>
    </location>
    <ligand>
        <name>ATP</name>
        <dbReference type="ChEBI" id="CHEBI:30616"/>
        <label>2</label>
    </ligand>
</feature>
<feature type="binding site" evidence="1">
    <location>
        <position position="746"/>
    </location>
    <ligand>
        <name>ATP</name>
        <dbReference type="ChEBI" id="CHEBI:30616"/>
        <label>2</label>
    </ligand>
</feature>
<feature type="binding site" evidence="1">
    <location>
        <position position="748"/>
    </location>
    <ligand>
        <name>ATP</name>
        <dbReference type="ChEBI" id="CHEBI:30616"/>
        <label>2</label>
    </ligand>
</feature>
<feature type="binding site" evidence="1">
    <location>
        <position position="752"/>
    </location>
    <ligand>
        <name>ATP</name>
        <dbReference type="ChEBI" id="CHEBI:30616"/>
        <label>2</label>
    </ligand>
</feature>
<feature type="binding site" evidence="1">
    <location>
        <position position="777"/>
    </location>
    <ligand>
        <name>ATP</name>
        <dbReference type="ChEBI" id="CHEBI:30616"/>
        <label>2</label>
    </ligand>
</feature>
<feature type="binding site" evidence="1">
    <location>
        <position position="778"/>
    </location>
    <ligand>
        <name>ATP</name>
        <dbReference type="ChEBI" id="CHEBI:30616"/>
        <label>2</label>
    </ligand>
</feature>
<feature type="binding site" evidence="1">
    <location>
        <position position="779"/>
    </location>
    <ligand>
        <name>ATP</name>
        <dbReference type="ChEBI" id="CHEBI:30616"/>
        <label>2</label>
    </ligand>
</feature>
<feature type="binding site" evidence="1">
    <location>
        <position position="780"/>
    </location>
    <ligand>
        <name>ATP</name>
        <dbReference type="ChEBI" id="CHEBI:30616"/>
        <label>2</label>
    </ligand>
</feature>
<feature type="binding site" evidence="1">
    <location>
        <position position="820"/>
    </location>
    <ligand>
        <name>ATP</name>
        <dbReference type="ChEBI" id="CHEBI:30616"/>
        <label>2</label>
    </ligand>
</feature>
<feature type="binding site" evidence="1">
    <location>
        <position position="820"/>
    </location>
    <ligand>
        <name>Mg(2+)</name>
        <dbReference type="ChEBI" id="CHEBI:18420"/>
        <label>3</label>
    </ligand>
</feature>
<feature type="binding site" evidence="1">
    <location>
        <position position="820"/>
    </location>
    <ligand>
        <name>Mn(2+)</name>
        <dbReference type="ChEBI" id="CHEBI:29035"/>
        <label>3</label>
    </ligand>
</feature>
<feature type="binding site" evidence="1">
    <location>
        <position position="832"/>
    </location>
    <ligand>
        <name>ATP</name>
        <dbReference type="ChEBI" id="CHEBI:30616"/>
        <label>2</label>
    </ligand>
</feature>
<feature type="binding site" evidence="1">
    <location>
        <position position="832"/>
    </location>
    <ligand>
        <name>Mg(2+)</name>
        <dbReference type="ChEBI" id="CHEBI:18420"/>
        <label>3</label>
    </ligand>
</feature>
<feature type="binding site" evidence="1">
    <location>
        <position position="832"/>
    </location>
    <ligand>
        <name>Mg(2+)</name>
        <dbReference type="ChEBI" id="CHEBI:18420"/>
        <label>4</label>
    </ligand>
</feature>
<feature type="binding site" evidence="1">
    <location>
        <position position="832"/>
    </location>
    <ligand>
        <name>Mn(2+)</name>
        <dbReference type="ChEBI" id="CHEBI:29035"/>
        <label>3</label>
    </ligand>
</feature>
<feature type="binding site" evidence="1">
    <location>
        <position position="832"/>
    </location>
    <ligand>
        <name>Mn(2+)</name>
        <dbReference type="ChEBI" id="CHEBI:29035"/>
        <label>4</label>
    </ligand>
</feature>
<feature type="binding site" evidence="1">
    <location>
        <position position="834"/>
    </location>
    <ligand>
        <name>Mg(2+)</name>
        <dbReference type="ChEBI" id="CHEBI:18420"/>
        <label>4</label>
    </ligand>
</feature>
<feature type="binding site" evidence="1">
    <location>
        <position position="834"/>
    </location>
    <ligand>
        <name>Mn(2+)</name>
        <dbReference type="ChEBI" id="CHEBI:29035"/>
        <label>4</label>
    </ligand>
</feature>
<reference key="1">
    <citation type="journal article" date="2004" name="Nucleic Acids Res.">
        <title>Whole genome comparisons of serotype 4b and 1/2a strains of the food-borne pathogen Listeria monocytogenes reveal new insights into the core genome components of this species.</title>
        <authorList>
            <person name="Nelson K.E."/>
            <person name="Fouts D.E."/>
            <person name="Mongodin E.F."/>
            <person name="Ravel J."/>
            <person name="DeBoy R.T."/>
            <person name="Kolonay J.F."/>
            <person name="Rasko D.A."/>
            <person name="Angiuoli S.V."/>
            <person name="Gill S.R."/>
            <person name="Paulsen I.T."/>
            <person name="Peterson J.D."/>
            <person name="White O."/>
            <person name="Nelson W.C."/>
            <person name="Nierman W.C."/>
            <person name="Beanan M.J."/>
            <person name="Brinkac L.M."/>
            <person name="Daugherty S.C."/>
            <person name="Dodson R.J."/>
            <person name="Durkin A.S."/>
            <person name="Madupu R."/>
            <person name="Haft D.H."/>
            <person name="Selengut J."/>
            <person name="Van Aken S.E."/>
            <person name="Khouri H.M."/>
            <person name="Fedorova N."/>
            <person name="Forberger H.A."/>
            <person name="Tran B."/>
            <person name="Kathariou S."/>
            <person name="Wonderling L.D."/>
            <person name="Uhlich G.A."/>
            <person name="Bayles D.O."/>
            <person name="Luchansky J.B."/>
            <person name="Fraser C.M."/>
        </authorList>
    </citation>
    <scope>NUCLEOTIDE SEQUENCE [LARGE SCALE GENOMIC DNA]</scope>
    <source>
        <strain>F2365</strain>
    </source>
</reference>
<organism>
    <name type="scientific">Listeria monocytogenes serotype 4b (strain F2365)</name>
    <dbReference type="NCBI Taxonomy" id="265669"/>
    <lineage>
        <taxon>Bacteria</taxon>
        <taxon>Bacillati</taxon>
        <taxon>Bacillota</taxon>
        <taxon>Bacilli</taxon>
        <taxon>Bacillales</taxon>
        <taxon>Listeriaceae</taxon>
        <taxon>Listeria</taxon>
    </lineage>
</organism>